<dbReference type="EMBL" id="AE014299">
    <property type="protein sequence ID" value="AAN55606.1"/>
    <property type="molecule type" value="Genomic_DNA"/>
</dbReference>
<dbReference type="RefSeq" id="NP_718162.1">
    <property type="nucleotide sequence ID" value="NC_004347.2"/>
</dbReference>
<dbReference type="RefSeq" id="WP_011072527.1">
    <property type="nucleotide sequence ID" value="NZ_CP053946.1"/>
</dbReference>
<dbReference type="SMR" id="Q8EE14"/>
<dbReference type="STRING" id="211586.SO_2576"/>
<dbReference type="PaxDb" id="211586-SO_2576"/>
<dbReference type="KEGG" id="son:SO_2576"/>
<dbReference type="PATRIC" id="fig|211586.12.peg.2480"/>
<dbReference type="eggNOG" id="COG0850">
    <property type="taxonomic scope" value="Bacteria"/>
</dbReference>
<dbReference type="HOGENOM" id="CLU_067812_0_1_6"/>
<dbReference type="OrthoDB" id="9794530at2"/>
<dbReference type="PhylomeDB" id="Q8EE14"/>
<dbReference type="BioCyc" id="SONE211586:G1GMP-2361-MONOMER"/>
<dbReference type="Proteomes" id="UP000008186">
    <property type="component" value="Chromosome"/>
</dbReference>
<dbReference type="GO" id="GO:0000902">
    <property type="term" value="P:cell morphogenesis"/>
    <property type="evidence" value="ECO:0007669"/>
    <property type="project" value="InterPro"/>
</dbReference>
<dbReference type="GO" id="GO:0000917">
    <property type="term" value="P:division septum assembly"/>
    <property type="evidence" value="ECO:0007669"/>
    <property type="project" value="UniProtKB-KW"/>
</dbReference>
<dbReference type="GO" id="GO:0051302">
    <property type="term" value="P:regulation of cell division"/>
    <property type="evidence" value="ECO:0007669"/>
    <property type="project" value="InterPro"/>
</dbReference>
<dbReference type="GO" id="GO:1901891">
    <property type="term" value="P:regulation of cell septum assembly"/>
    <property type="evidence" value="ECO:0007669"/>
    <property type="project" value="InterPro"/>
</dbReference>
<dbReference type="Gene3D" id="2.160.20.70">
    <property type="match status" value="1"/>
</dbReference>
<dbReference type="Gene3D" id="3.30.70.260">
    <property type="match status" value="1"/>
</dbReference>
<dbReference type="HAMAP" id="MF_00267">
    <property type="entry name" value="MinC"/>
    <property type="match status" value="1"/>
</dbReference>
<dbReference type="InterPro" id="IPR016098">
    <property type="entry name" value="CAP/MinC_C"/>
</dbReference>
<dbReference type="InterPro" id="IPR013033">
    <property type="entry name" value="MinC"/>
</dbReference>
<dbReference type="InterPro" id="IPR036145">
    <property type="entry name" value="MinC_C_sf"/>
</dbReference>
<dbReference type="InterPro" id="IPR007874">
    <property type="entry name" value="MinC_N"/>
</dbReference>
<dbReference type="InterPro" id="IPR005526">
    <property type="entry name" value="Septum_form_inhib_MinC_C"/>
</dbReference>
<dbReference type="NCBIfam" id="TIGR01222">
    <property type="entry name" value="minC"/>
    <property type="match status" value="1"/>
</dbReference>
<dbReference type="PANTHER" id="PTHR34108">
    <property type="entry name" value="SEPTUM SITE-DETERMINING PROTEIN MINC"/>
    <property type="match status" value="1"/>
</dbReference>
<dbReference type="PANTHER" id="PTHR34108:SF1">
    <property type="entry name" value="SEPTUM SITE-DETERMINING PROTEIN MINC"/>
    <property type="match status" value="1"/>
</dbReference>
<dbReference type="Pfam" id="PF03775">
    <property type="entry name" value="MinC_C"/>
    <property type="match status" value="1"/>
</dbReference>
<dbReference type="Pfam" id="PF05209">
    <property type="entry name" value="MinC_N"/>
    <property type="match status" value="1"/>
</dbReference>
<dbReference type="SUPFAM" id="SSF63848">
    <property type="entry name" value="Cell-division inhibitor MinC, C-terminal domain"/>
    <property type="match status" value="1"/>
</dbReference>
<name>MINC_SHEON</name>
<protein>
    <recommendedName>
        <fullName evidence="1">Probable septum site-determining protein MinC</fullName>
    </recommendedName>
</protein>
<evidence type="ECO:0000255" key="1">
    <source>
        <dbReference type="HAMAP-Rule" id="MF_00267"/>
    </source>
</evidence>
<sequence length="221" mass="23121">MSKPSLELKGATFTLSVLHINSSDLNAVMAELDSKLAQAPQFFLGAPLVVNLSAIQDSNFNLRGLKELLLSRQLVIVGITGATTVLSNQAKTLGLAIVKAGKQTASPPPAPRQTKVLKQNIRSGQQVYAKNGDLIIFGAVGNGAEVIADGSIHIYGALRGKAMAGAAGDTTAVIIAHSLEAELVSIAGQYWLAENLQQHSSDKSGCIRLNGESLIVESLPL</sequence>
<comment type="function">
    <text evidence="1">Cell division inhibitor that blocks the formation of polar Z ring septums. Rapidly oscillates between the poles of the cell to destabilize FtsZ filaments that have formed before they mature into polar Z rings. Prevents FtsZ polymerization.</text>
</comment>
<comment type="subunit">
    <text evidence="1">Interacts with MinD and FtsZ.</text>
</comment>
<comment type="similarity">
    <text evidence="1">Belongs to the MinC family.</text>
</comment>
<accession>Q8EE14</accession>
<keyword id="KW-0131">Cell cycle</keyword>
<keyword id="KW-0132">Cell division</keyword>
<keyword id="KW-1185">Reference proteome</keyword>
<keyword id="KW-0717">Septation</keyword>
<gene>
    <name evidence="1" type="primary">minC</name>
    <name type="ordered locus">SO_2576</name>
</gene>
<proteinExistence type="inferred from homology"/>
<reference key="1">
    <citation type="journal article" date="2002" name="Nat. Biotechnol.">
        <title>Genome sequence of the dissimilatory metal ion-reducing bacterium Shewanella oneidensis.</title>
        <authorList>
            <person name="Heidelberg J.F."/>
            <person name="Paulsen I.T."/>
            <person name="Nelson K.E."/>
            <person name="Gaidos E.J."/>
            <person name="Nelson W.C."/>
            <person name="Read T.D."/>
            <person name="Eisen J.A."/>
            <person name="Seshadri R."/>
            <person name="Ward N.L."/>
            <person name="Methe B.A."/>
            <person name="Clayton R.A."/>
            <person name="Meyer T."/>
            <person name="Tsapin A."/>
            <person name="Scott J."/>
            <person name="Beanan M.J."/>
            <person name="Brinkac L.M."/>
            <person name="Daugherty S.C."/>
            <person name="DeBoy R.T."/>
            <person name="Dodson R.J."/>
            <person name="Durkin A.S."/>
            <person name="Haft D.H."/>
            <person name="Kolonay J.F."/>
            <person name="Madupu R."/>
            <person name="Peterson J.D."/>
            <person name="Umayam L.A."/>
            <person name="White O."/>
            <person name="Wolf A.M."/>
            <person name="Vamathevan J.J."/>
            <person name="Weidman J.F."/>
            <person name="Impraim M."/>
            <person name="Lee K."/>
            <person name="Berry K.J."/>
            <person name="Lee C."/>
            <person name="Mueller J."/>
            <person name="Khouri H.M."/>
            <person name="Gill J."/>
            <person name="Utterback T.R."/>
            <person name="McDonald L.A."/>
            <person name="Feldblyum T.V."/>
            <person name="Smith H.O."/>
            <person name="Venter J.C."/>
            <person name="Nealson K.H."/>
            <person name="Fraser C.M."/>
        </authorList>
    </citation>
    <scope>NUCLEOTIDE SEQUENCE [LARGE SCALE GENOMIC DNA]</scope>
    <source>
        <strain>ATCC 700550 / JCM 31522 / CIP 106686 / LMG 19005 / NCIMB 14063 / MR-1</strain>
    </source>
</reference>
<feature type="chain" id="PRO_0000189062" description="Probable septum site-determining protein MinC">
    <location>
        <begin position="1"/>
        <end position="221"/>
    </location>
</feature>
<organism>
    <name type="scientific">Shewanella oneidensis (strain ATCC 700550 / JCM 31522 / CIP 106686 / LMG 19005 / NCIMB 14063 / MR-1)</name>
    <dbReference type="NCBI Taxonomy" id="211586"/>
    <lineage>
        <taxon>Bacteria</taxon>
        <taxon>Pseudomonadati</taxon>
        <taxon>Pseudomonadota</taxon>
        <taxon>Gammaproteobacteria</taxon>
        <taxon>Alteromonadales</taxon>
        <taxon>Shewanellaceae</taxon>
        <taxon>Shewanella</taxon>
    </lineage>
</organism>